<keyword id="KW-0963">Cytoplasm</keyword>
<keyword id="KW-0489">Methyltransferase</keyword>
<keyword id="KW-0949">S-adenosyl-L-methionine</keyword>
<keyword id="KW-0808">Transferase</keyword>
<keyword id="KW-0819">tRNA processing</keyword>
<proteinExistence type="inferred from homology"/>
<accession>C1FSL5</accession>
<protein>
    <recommendedName>
        <fullName evidence="1">tRNA (guanine-N(1)-)-methyltransferase</fullName>
        <ecNumber evidence="1">2.1.1.228</ecNumber>
    </recommendedName>
    <alternativeName>
        <fullName evidence="1">M1G-methyltransferase</fullName>
    </alternativeName>
    <alternativeName>
        <fullName evidence="1">tRNA [GM37] methyltransferase</fullName>
    </alternativeName>
</protein>
<organism>
    <name type="scientific">Clostridium botulinum (strain Kyoto / Type A2)</name>
    <dbReference type="NCBI Taxonomy" id="536232"/>
    <lineage>
        <taxon>Bacteria</taxon>
        <taxon>Bacillati</taxon>
        <taxon>Bacillota</taxon>
        <taxon>Clostridia</taxon>
        <taxon>Eubacteriales</taxon>
        <taxon>Clostridiaceae</taxon>
        <taxon>Clostridium</taxon>
    </lineage>
</organism>
<gene>
    <name evidence="1" type="primary">trmD</name>
    <name type="ordered locus">CLM_2738</name>
</gene>
<dbReference type="EC" id="2.1.1.228" evidence="1"/>
<dbReference type="EMBL" id="CP001581">
    <property type="protein sequence ID" value="ACO86650.1"/>
    <property type="molecule type" value="Genomic_DNA"/>
</dbReference>
<dbReference type="RefSeq" id="WP_012705440.1">
    <property type="nucleotide sequence ID" value="NC_012563.1"/>
</dbReference>
<dbReference type="SMR" id="C1FSL5"/>
<dbReference type="KEGG" id="cby:CLM_2738"/>
<dbReference type="eggNOG" id="COG0336">
    <property type="taxonomic scope" value="Bacteria"/>
</dbReference>
<dbReference type="HOGENOM" id="CLU_047363_0_1_9"/>
<dbReference type="Proteomes" id="UP000001374">
    <property type="component" value="Chromosome"/>
</dbReference>
<dbReference type="GO" id="GO:0005829">
    <property type="term" value="C:cytosol"/>
    <property type="evidence" value="ECO:0007669"/>
    <property type="project" value="TreeGrafter"/>
</dbReference>
<dbReference type="GO" id="GO:0052906">
    <property type="term" value="F:tRNA (guanine(37)-N1)-methyltransferase activity"/>
    <property type="evidence" value="ECO:0007669"/>
    <property type="project" value="UniProtKB-UniRule"/>
</dbReference>
<dbReference type="GO" id="GO:0002939">
    <property type="term" value="P:tRNA N1-guanine methylation"/>
    <property type="evidence" value="ECO:0007669"/>
    <property type="project" value="TreeGrafter"/>
</dbReference>
<dbReference type="CDD" id="cd18080">
    <property type="entry name" value="TrmD-like"/>
    <property type="match status" value="1"/>
</dbReference>
<dbReference type="FunFam" id="1.10.1270.20:FF:000001">
    <property type="entry name" value="tRNA (guanine-N(1)-)-methyltransferase"/>
    <property type="match status" value="1"/>
</dbReference>
<dbReference type="FunFam" id="3.40.1280.10:FF:000001">
    <property type="entry name" value="tRNA (guanine-N(1)-)-methyltransferase"/>
    <property type="match status" value="1"/>
</dbReference>
<dbReference type="Gene3D" id="3.40.1280.10">
    <property type="match status" value="1"/>
</dbReference>
<dbReference type="Gene3D" id="1.10.1270.20">
    <property type="entry name" value="tRNA(m1g37)methyltransferase, domain 2"/>
    <property type="match status" value="1"/>
</dbReference>
<dbReference type="HAMAP" id="MF_00605">
    <property type="entry name" value="TrmD"/>
    <property type="match status" value="1"/>
</dbReference>
<dbReference type="InterPro" id="IPR029028">
    <property type="entry name" value="Alpha/beta_knot_MTases"/>
</dbReference>
<dbReference type="InterPro" id="IPR023148">
    <property type="entry name" value="tRNA_m1G_MeTrfase_C_sf"/>
</dbReference>
<dbReference type="InterPro" id="IPR002649">
    <property type="entry name" value="tRNA_m1G_MeTrfase_TrmD"/>
</dbReference>
<dbReference type="InterPro" id="IPR029026">
    <property type="entry name" value="tRNA_m1G_MTases_N"/>
</dbReference>
<dbReference type="InterPro" id="IPR016009">
    <property type="entry name" value="tRNA_MeTrfase_TRMD/TRM10"/>
</dbReference>
<dbReference type="NCBIfam" id="NF000648">
    <property type="entry name" value="PRK00026.1"/>
    <property type="match status" value="1"/>
</dbReference>
<dbReference type="NCBIfam" id="TIGR00088">
    <property type="entry name" value="trmD"/>
    <property type="match status" value="1"/>
</dbReference>
<dbReference type="PANTHER" id="PTHR46417">
    <property type="entry name" value="TRNA (GUANINE-N(1)-)-METHYLTRANSFERASE"/>
    <property type="match status" value="1"/>
</dbReference>
<dbReference type="PANTHER" id="PTHR46417:SF1">
    <property type="entry name" value="TRNA (GUANINE-N(1)-)-METHYLTRANSFERASE"/>
    <property type="match status" value="1"/>
</dbReference>
<dbReference type="Pfam" id="PF01746">
    <property type="entry name" value="tRNA_m1G_MT"/>
    <property type="match status" value="1"/>
</dbReference>
<dbReference type="PIRSF" id="PIRSF000386">
    <property type="entry name" value="tRNA_mtase"/>
    <property type="match status" value="1"/>
</dbReference>
<dbReference type="SUPFAM" id="SSF75217">
    <property type="entry name" value="alpha/beta knot"/>
    <property type="match status" value="1"/>
</dbReference>
<feature type="chain" id="PRO_1000147080" description="tRNA (guanine-N(1)-)-methyltransferase">
    <location>
        <begin position="1"/>
        <end position="240"/>
    </location>
</feature>
<feature type="binding site" evidence="1">
    <location>
        <position position="110"/>
    </location>
    <ligand>
        <name>S-adenosyl-L-methionine</name>
        <dbReference type="ChEBI" id="CHEBI:59789"/>
    </ligand>
</feature>
<feature type="binding site" evidence="1">
    <location>
        <begin position="129"/>
        <end position="134"/>
    </location>
    <ligand>
        <name>S-adenosyl-L-methionine</name>
        <dbReference type="ChEBI" id="CHEBI:59789"/>
    </ligand>
</feature>
<evidence type="ECO:0000255" key="1">
    <source>
        <dbReference type="HAMAP-Rule" id="MF_00605"/>
    </source>
</evidence>
<name>TRMD_CLOBJ</name>
<reference key="1">
    <citation type="submission" date="2008-10" db="EMBL/GenBank/DDBJ databases">
        <title>Genome sequence of Clostridium botulinum A2 Kyoto.</title>
        <authorList>
            <person name="Shrivastava S."/>
            <person name="Brinkac L.M."/>
            <person name="Brown J.L."/>
            <person name="Bruce D."/>
            <person name="Detter C.C."/>
            <person name="Johnson E.A."/>
            <person name="Munk C.A."/>
            <person name="Smith L.A."/>
            <person name="Smith T.J."/>
            <person name="Sutton G."/>
            <person name="Brettin T.S."/>
        </authorList>
    </citation>
    <scope>NUCLEOTIDE SEQUENCE [LARGE SCALE GENOMIC DNA]</scope>
    <source>
        <strain>Kyoto / Type A2</strain>
    </source>
</reference>
<sequence length="240" mass="27421">MRIDVLTLFPEMFSIFNHSIIGKAIEKEILKINTVNIRDYTIDKHKKVDDYPYGGGAGMVMAAQPIVDAIKTVKKENKGKVIFLGPKGKTFNQNLAKELAKEEELIFLCGHYEGIDERAYEYIDMEISLGDFVLTGGEMACIPIVDSICRLVDGVLKSSESYEDESFYNGLLEYPQYTRPAIYEGKSVPEVLLSGHHENIKKWRKAKSLIITNKVRPDLFKKYKLTEEDKKILKDFNKKL</sequence>
<comment type="function">
    <text evidence="1">Specifically methylates guanosine-37 in various tRNAs.</text>
</comment>
<comment type="catalytic activity">
    <reaction evidence="1">
        <text>guanosine(37) in tRNA + S-adenosyl-L-methionine = N(1)-methylguanosine(37) in tRNA + S-adenosyl-L-homocysteine + H(+)</text>
        <dbReference type="Rhea" id="RHEA:36899"/>
        <dbReference type="Rhea" id="RHEA-COMP:10145"/>
        <dbReference type="Rhea" id="RHEA-COMP:10147"/>
        <dbReference type="ChEBI" id="CHEBI:15378"/>
        <dbReference type="ChEBI" id="CHEBI:57856"/>
        <dbReference type="ChEBI" id="CHEBI:59789"/>
        <dbReference type="ChEBI" id="CHEBI:73542"/>
        <dbReference type="ChEBI" id="CHEBI:74269"/>
        <dbReference type="EC" id="2.1.1.228"/>
    </reaction>
</comment>
<comment type="subunit">
    <text evidence="1">Homodimer.</text>
</comment>
<comment type="subcellular location">
    <subcellularLocation>
        <location evidence="1">Cytoplasm</location>
    </subcellularLocation>
</comment>
<comment type="similarity">
    <text evidence="1">Belongs to the RNA methyltransferase TrmD family.</text>
</comment>